<protein>
    <recommendedName>
        <fullName evidence="1">5'-nucleotidase SurE</fullName>
        <ecNumber evidence="1">3.1.3.5</ecNumber>
    </recommendedName>
    <alternativeName>
        <fullName evidence="1">Nucleoside 5'-monophosphate phosphohydrolase</fullName>
    </alternativeName>
</protein>
<evidence type="ECO:0000255" key="1">
    <source>
        <dbReference type="HAMAP-Rule" id="MF_00060"/>
    </source>
</evidence>
<name>SURE_LAWIP</name>
<organism>
    <name type="scientific">Lawsonia intracellularis (strain PHE/MN1-00)</name>
    <dbReference type="NCBI Taxonomy" id="363253"/>
    <lineage>
        <taxon>Bacteria</taxon>
        <taxon>Pseudomonadati</taxon>
        <taxon>Thermodesulfobacteriota</taxon>
        <taxon>Desulfovibrionia</taxon>
        <taxon>Desulfovibrionales</taxon>
        <taxon>Desulfovibrionaceae</taxon>
        <taxon>Lawsonia</taxon>
    </lineage>
</organism>
<gene>
    <name evidence="1" type="primary">surE</name>
    <name type="ordered locus">LI0762</name>
</gene>
<keyword id="KW-0963">Cytoplasm</keyword>
<keyword id="KW-0378">Hydrolase</keyword>
<keyword id="KW-0479">Metal-binding</keyword>
<keyword id="KW-0547">Nucleotide-binding</keyword>
<keyword id="KW-1185">Reference proteome</keyword>
<feature type="chain" id="PRO_1000007743" description="5'-nucleotidase SurE">
    <location>
        <begin position="1"/>
        <end position="251"/>
    </location>
</feature>
<feature type="binding site" evidence="1">
    <location>
        <position position="8"/>
    </location>
    <ligand>
        <name>a divalent metal cation</name>
        <dbReference type="ChEBI" id="CHEBI:60240"/>
    </ligand>
</feature>
<feature type="binding site" evidence="1">
    <location>
        <position position="9"/>
    </location>
    <ligand>
        <name>a divalent metal cation</name>
        <dbReference type="ChEBI" id="CHEBI:60240"/>
    </ligand>
</feature>
<feature type="binding site" evidence="1">
    <location>
        <position position="40"/>
    </location>
    <ligand>
        <name>a divalent metal cation</name>
        <dbReference type="ChEBI" id="CHEBI:60240"/>
    </ligand>
</feature>
<feature type="binding site" evidence="1">
    <location>
        <position position="95"/>
    </location>
    <ligand>
        <name>a divalent metal cation</name>
        <dbReference type="ChEBI" id="CHEBI:60240"/>
    </ligand>
</feature>
<comment type="function">
    <text evidence="1">Nucleotidase that shows phosphatase activity on nucleoside 5'-monophosphates.</text>
</comment>
<comment type="catalytic activity">
    <reaction evidence="1">
        <text>a ribonucleoside 5'-phosphate + H2O = a ribonucleoside + phosphate</text>
        <dbReference type="Rhea" id="RHEA:12484"/>
        <dbReference type="ChEBI" id="CHEBI:15377"/>
        <dbReference type="ChEBI" id="CHEBI:18254"/>
        <dbReference type="ChEBI" id="CHEBI:43474"/>
        <dbReference type="ChEBI" id="CHEBI:58043"/>
        <dbReference type="EC" id="3.1.3.5"/>
    </reaction>
</comment>
<comment type="cofactor">
    <cofactor evidence="1">
        <name>a divalent metal cation</name>
        <dbReference type="ChEBI" id="CHEBI:60240"/>
    </cofactor>
    <text evidence="1">Binds 1 divalent metal cation per subunit.</text>
</comment>
<comment type="subcellular location">
    <subcellularLocation>
        <location evidence="1">Cytoplasm</location>
    </subcellularLocation>
</comment>
<comment type="similarity">
    <text evidence="1">Belongs to the SurE nucleotidase family.</text>
</comment>
<proteinExistence type="inferred from homology"/>
<sequence>MNILLTNDDGIHASGLRAIYNELVKLGHNVFPFAPTVERSGASNSVSLNVPLTTQDVYDGDFKGTAINGTPVDCVKVGLAKLHENPPDLIISGINAGHNVGTDILYSGTVAAAMEGCVAGIPSIAFSRPREEVDPTQSYAEHAANLLKKIDFSLVPKGQILNINYPSISIKKTLGIKVCAMSTQGWEHKLHKKKDDNGKPYWFISPYIPYSHGISQTDVFFLLEGWITITPLMFNMTAQTTLSNLEQHSFT</sequence>
<reference key="1">
    <citation type="submission" date="2005-11" db="EMBL/GenBank/DDBJ databases">
        <title>The complete genome sequence of Lawsonia intracellularis: the causative agent of proliferative enteropathy.</title>
        <authorList>
            <person name="Kaur K."/>
            <person name="Zhang Q."/>
            <person name="Beckler D."/>
            <person name="Munir S."/>
            <person name="Li L."/>
            <person name="Kinsley K."/>
            <person name="Herron L."/>
            <person name="Peterson A."/>
            <person name="May B."/>
            <person name="Singh S."/>
            <person name="Gebhart C."/>
            <person name="Kapur V."/>
        </authorList>
    </citation>
    <scope>NUCLEOTIDE SEQUENCE [LARGE SCALE GENOMIC DNA]</scope>
    <source>
        <strain>PHE/MN1-00</strain>
    </source>
</reference>
<dbReference type="EC" id="3.1.3.5" evidence="1"/>
<dbReference type="EMBL" id="AM180252">
    <property type="protein sequence ID" value="CAJ54816.1"/>
    <property type="molecule type" value="Genomic_DNA"/>
</dbReference>
<dbReference type="RefSeq" id="WP_011526845.1">
    <property type="nucleotide sequence ID" value="NC_008011.1"/>
</dbReference>
<dbReference type="SMR" id="Q1MQB1"/>
<dbReference type="STRING" id="363253.LI0762"/>
<dbReference type="KEGG" id="lip:LI0762"/>
<dbReference type="eggNOG" id="COG0496">
    <property type="taxonomic scope" value="Bacteria"/>
</dbReference>
<dbReference type="HOGENOM" id="CLU_045192_1_2_7"/>
<dbReference type="OrthoDB" id="9780815at2"/>
<dbReference type="Proteomes" id="UP000002430">
    <property type="component" value="Chromosome"/>
</dbReference>
<dbReference type="GO" id="GO:0005737">
    <property type="term" value="C:cytoplasm"/>
    <property type="evidence" value="ECO:0007669"/>
    <property type="project" value="UniProtKB-SubCell"/>
</dbReference>
<dbReference type="GO" id="GO:0008253">
    <property type="term" value="F:5'-nucleotidase activity"/>
    <property type="evidence" value="ECO:0007669"/>
    <property type="project" value="UniProtKB-UniRule"/>
</dbReference>
<dbReference type="GO" id="GO:0046872">
    <property type="term" value="F:metal ion binding"/>
    <property type="evidence" value="ECO:0007669"/>
    <property type="project" value="UniProtKB-UniRule"/>
</dbReference>
<dbReference type="GO" id="GO:0000166">
    <property type="term" value="F:nucleotide binding"/>
    <property type="evidence" value="ECO:0007669"/>
    <property type="project" value="UniProtKB-KW"/>
</dbReference>
<dbReference type="Gene3D" id="3.40.1210.10">
    <property type="entry name" value="Survival protein SurE-like phosphatase/nucleotidase"/>
    <property type="match status" value="1"/>
</dbReference>
<dbReference type="HAMAP" id="MF_00060">
    <property type="entry name" value="SurE"/>
    <property type="match status" value="1"/>
</dbReference>
<dbReference type="InterPro" id="IPR030048">
    <property type="entry name" value="SurE"/>
</dbReference>
<dbReference type="InterPro" id="IPR002828">
    <property type="entry name" value="SurE-like_Pase/nucleotidase"/>
</dbReference>
<dbReference type="InterPro" id="IPR036523">
    <property type="entry name" value="SurE-like_sf"/>
</dbReference>
<dbReference type="NCBIfam" id="TIGR00087">
    <property type="entry name" value="surE"/>
    <property type="match status" value="1"/>
</dbReference>
<dbReference type="PANTHER" id="PTHR30457">
    <property type="entry name" value="5'-NUCLEOTIDASE SURE"/>
    <property type="match status" value="1"/>
</dbReference>
<dbReference type="PANTHER" id="PTHR30457:SF0">
    <property type="entry name" value="PHOSPHATASE, PUTATIVE (AFU_ORTHOLOGUE AFUA_4G01070)-RELATED"/>
    <property type="match status" value="1"/>
</dbReference>
<dbReference type="Pfam" id="PF01975">
    <property type="entry name" value="SurE"/>
    <property type="match status" value="1"/>
</dbReference>
<dbReference type="SUPFAM" id="SSF64167">
    <property type="entry name" value="SurE-like"/>
    <property type="match status" value="1"/>
</dbReference>
<accession>Q1MQB1</accession>